<reference key="1">
    <citation type="submission" date="2000-04" db="EMBL/GenBank/DDBJ databases">
        <title>Isolation of full-length cDNA clones from mouse brain cDNA library made by oligo-capping method.</title>
        <authorList>
            <person name="Osada N."/>
            <person name="Kusuda J."/>
            <person name="Tanuma R."/>
            <person name="Ito A."/>
            <person name="Hirata M."/>
            <person name="Sugano S."/>
            <person name="Hashimoto K."/>
        </authorList>
    </citation>
    <scope>NUCLEOTIDE SEQUENCE [LARGE SCALE MRNA] (ISOFORM 3)</scope>
    <source>
        <strain>C57BL/6J</strain>
        <tissue>Brain</tissue>
    </source>
</reference>
<reference key="2">
    <citation type="journal article" date="2005" name="Science">
        <title>The transcriptional landscape of the mammalian genome.</title>
        <authorList>
            <person name="Carninci P."/>
            <person name="Kasukawa T."/>
            <person name="Katayama S."/>
            <person name="Gough J."/>
            <person name="Frith M.C."/>
            <person name="Maeda N."/>
            <person name="Oyama R."/>
            <person name="Ravasi T."/>
            <person name="Lenhard B."/>
            <person name="Wells C."/>
            <person name="Kodzius R."/>
            <person name="Shimokawa K."/>
            <person name="Bajic V.B."/>
            <person name="Brenner S.E."/>
            <person name="Batalov S."/>
            <person name="Forrest A.R."/>
            <person name="Zavolan M."/>
            <person name="Davis M.J."/>
            <person name="Wilming L.G."/>
            <person name="Aidinis V."/>
            <person name="Allen J.E."/>
            <person name="Ambesi-Impiombato A."/>
            <person name="Apweiler R."/>
            <person name="Aturaliya R.N."/>
            <person name="Bailey T.L."/>
            <person name="Bansal M."/>
            <person name="Baxter L."/>
            <person name="Beisel K.W."/>
            <person name="Bersano T."/>
            <person name="Bono H."/>
            <person name="Chalk A.M."/>
            <person name="Chiu K.P."/>
            <person name="Choudhary V."/>
            <person name="Christoffels A."/>
            <person name="Clutterbuck D.R."/>
            <person name="Crowe M.L."/>
            <person name="Dalla E."/>
            <person name="Dalrymple B.P."/>
            <person name="de Bono B."/>
            <person name="Della Gatta G."/>
            <person name="di Bernardo D."/>
            <person name="Down T."/>
            <person name="Engstrom P."/>
            <person name="Fagiolini M."/>
            <person name="Faulkner G."/>
            <person name="Fletcher C.F."/>
            <person name="Fukushima T."/>
            <person name="Furuno M."/>
            <person name="Futaki S."/>
            <person name="Gariboldi M."/>
            <person name="Georgii-Hemming P."/>
            <person name="Gingeras T.R."/>
            <person name="Gojobori T."/>
            <person name="Green R.E."/>
            <person name="Gustincich S."/>
            <person name="Harbers M."/>
            <person name="Hayashi Y."/>
            <person name="Hensch T.K."/>
            <person name="Hirokawa N."/>
            <person name="Hill D."/>
            <person name="Huminiecki L."/>
            <person name="Iacono M."/>
            <person name="Ikeo K."/>
            <person name="Iwama A."/>
            <person name="Ishikawa T."/>
            <person name="Jakt M."/>
            <person name="Kanapin A."/>
            <person name="Katoh M."/>
            <person name="Kawasawa Y."/>
            <person name="Kelso J."/>
            <person name="Kitamura H."/>
            <person name="Kitano H."/>
            <person name="Kollias G."/>
            <person name="Krishnan S.P."/>
            <person name="Kruger A."/>
            <person name="Kummerfeld S.K."/>
            <person name="Kurochkin I.V."/>
            <person name="Lareau L.F."/>
            <person name="Lazarevic D."/>
            <person name="Lipovich L."/>
            <person name="Liu J."/>
            <person name="Liuni S."/>
            <person name="McWilliam S."/>
            <person name="Madan Babu M."/>
            <person name="Madera M."/>
            <person name="Marchionni L."/>
            <person name="Matsuda H."/>
            <person name="Matsuzawa S."/>
            <person name="Miki H."/>
            <person name="Mignone F."/>
            <person name="Miyake S."/>
            <person name="Morris K."/>
            <person name="Mottagui-Tabar S."/>
            <person name="Mulder N."/>
            <person name="Nakano N."/>
            <person name="Nakauchi H."/>
            <person name="Ng P."/>
            <person name="Nilsson R."/>
            <person name="Nishiguchi S."/>
            <person name="Nishikawa S."/>
            <person name="Nori F."/>
            <person name="Ohara O."/>
            <person name="Okazaki Y."/>
            <person name="Orlando V."/>
            <person name="Pang K.C."/>
            <person name="Pavan W.J."/>
            <person name="Pavesi G."/>
            <person name="Pesole G."/>
            <person name="Petrovsky N."/>
            <person name="Piazza S."/>
            <person name="Reed J."/>
            <person name="Reid J.F."/>
            <person name="Ring B.Z."/>
            <person name="Ringwald M."/>
            <person name="Rost B."/>
            <person name="Ruan Y."/>
            <person name="Salzberg S.L."/>
            <person name="Sandelin A."/>
            <person name="Schneider C."/>
            <person name="Schoenbach C."/>
            <person name="Sekiguchi K."/>
            <person name="Semple C.A."/>
            <person name="Seno S."/>
            <person name="Sessa L."/>
            <person name="Sheng Y."/>
            <person name="Shibata Y."/>
            <person name="Shimada H."/>
            <person name="Shimada K."/>
            <person name="Silva D."/>
            <person name="Sinclair B."/>
            <person name="Sperling S."/>
            <person name="Stupka E."/>
            <person name="Sugiura K."/>
            <person name="Sultana R."/>
            <person name="Takenaka Y."/>
            <person name="Taki K."/>
            <person name="Tammoja K."/>
            <person name="Tan S.L."/>
            <person name="Tang S."/>
            <person name="Taylor M.S."/>
            <person name="Tegner J."/>
            <person name="Teichmann S.A."/>
            <person name="Ueda H.R."/>
            <person name="van Nimwegen E."/>
            <person name="Verardo R."/>
            <person name="Wei C.L."/>
            <person name="Yagi K."/>
            <person name="Yamanishi H."/>
            <person name="Zabarovsky E."/>
            <person name="Zhu S."/>
            <person name="Zimmer A."/>
            <person name="Hide W."/>
            <person name="Bult C."/>
            <person name="Grimmond S.M."/>
            <person name="Teasdale R.D."/>
            <person name="Liu E.T."/>
            <person name="Brusic V."/>
            <person name="Quackenbush J."/>
            <person name="Wahlestedt C."/>
            <person name="Mattick J.S."/>
            <person name="Hume D.A."/>
            <person name="Kai C."/>
            <person name="Sasaki D."/>
            <person name="Tomaru Y."/>
            <person name="Fukuda S."/>
            <person name="Kanamori-Katayama M."/>
            <person name="Suzuki M."/>
            <person name="Aoki J."/>
            <person name="Arakawa T."/>
            <person name="Iida J."/>
            <person name="Imamura K."/>
            <person name="Itoh M."/>
            <person name="Kato T."/>
            <person name="Kawaji H."/>
            <person name="Kawagashira N."/>
            <person name="Kawashima T."/>
            <person name="Kojima M."/>
            <person name="Kondo S."/>
            <person name="Konno H."/>
            <person name="Nakano K."/>
            <person name="Ninomiya N."/>
            <person name="Nishio T."/>
            <person name="Okada M."/>
            <person name="Plessy C."/>
            <person name="Shibata K."/>
            <person name="Shiraki T."/>
            <person name="Suzuki S."/>
            <person name="Tagami M."/>
            <person name="Waki K."/>
            <person name="Watahiki A."/>
            <person name="Okamura-Oho Y."/>
            <person name="Suzuki H."/>
            <person name="Kawai J."/>
            <person name="Hayashizaki Y."/>
        </authorList>
    </citation>
    <scope>NUCLEOTIDE SEQUENCE [LARGE SCALE MRNA] (ISOFORMS 1; 2 AND 3)</scope>
    <source>
        <strain>C57BL/6J</strain>
        <strain>NOD</strain>
        <tissue>Bone marrow macrophage</tissue>
        <tissue>Embryo</tissue>
        <tissue>Embryonic head</tissue>
        <tissue>Testis</tissue>
        <tissue>Thymus</tissue>
        <tissue>Tongue</tissue>
    </source>
</reference>
<reference key="3">
    <citation type="journal article" date="2009" name="PLoS Biol.">
        <title>Lineage-specific biology revealed by a finished genome assembly of the mouse.</title>
        <authorList>
            <person name="Church D.M."/>
            <person name="Goodstadt L."/>
            <person name="Hillier L.W."/>
            <person name="Zody M.C."/>
            <person name="Goldstein S."/>
            <person name="She X."/>
            <person name="Bult C.J."/>
            <person name="Agarwala R."/>
            <person name="Cherry J.L."/>
            <person name="DiCuccio M."/>
            <person name="Hlavina W."/>
            <person name="Kapustin Y."/>
            <person name="Meric P."/>
            <person name="Maglott D."/>
            <person name="Birtle Z."/>
            <person name="Marques A.C."/>
            <person name="Graves T."/>
            <person name="Zhou S."/>
            <person name="Teague B."/>
            <person name="Potamousis K."/>
            <person name="Churas C."/>
            <person name="Place M."/>
            <person name="Herschleb J."/>
            <person name="Runnheim R."/>
            <person name="Forrest D."/>
            <person name="Amos-Landgraf J."/>
            <person name="Schwartz D.C."/>
            <person name="Cheng Z."/>
            <person name="Lindblad-Toh K."/>
            <person name="Eichler E.E."/>
            <person name="Ponting C.P."/>
        </authorList>
    </citation>
    <scope>NUCLEOTIDE SEQUENCE [LARGE SCALE GENOMIC DNA]</scope>
    <source>
        <strain>C57BL/6J</strain>
    </source>
</reference>
<reference key="4">
    <citation type="journal article" date="2004" name="Genome Res.">
        <title>The status, quality, and expansion of the NIH full-length cDNA project: the Mammalian Gene Collection (MGC).</title>
        <authorList>
            <consortium name="The MGC Project Team"/>
        </authorList>
    </citation>
    <scope>NUCLEOTIDE SEQUENCE [LARGE SCALE MRNA] (ISOFORM 2)</scope>
    <source>
        <strain>C57BL/6J</strain>
        <tissue>Brain</tissue>
    </source>
</reference>
<reference key="5">
    <citation type="journal article" date="2010" name="Cell">
        <title>A tissue-specific atlas of mouse protein phosphorylation and expression.</title>
        <authorList>
            <person name="Huttlin E.L."/>
            <person name="Jedrychowski M.P."/>
            <person name="Elias J.E."/>
            <person name="Goswami T."/>
            <person name="Rad R."/>
            <person name="Beausoleil S.A."/>
            <person name="Villen J."/>
            <person name="Haas W."/>
            <person name="Sowa M.E."/>
            <person name="Gygi S.P."/>
        </authorList>
    </citation>
    <scope>PHOSPHORYLATION [LARGE SCALE ANALYSIS] AT SER-17</scope>
    <scope>IDENTIFICATION BY MASS SPECTROMETRY [LARGE SCALE ANALYSIS]</scope>
    <source>
        <tissue>Kidney</tissue>
        <tissue>Lung</tissue>
        <tissue>Spleen</tissue>
        <tissue>Testis</tissue>
    </source>
</reference>
<reference key="6">
    <citation type="journal article" date="2014" name="Mol. Cell. Proteomics">
        <title>Immunoaffinity enrichment and mass spectrometry analysis of protein methylation.</title>
        <authorList>
            <person name="Guo A."/>
            <person name="Gu H."/>
            <person name="Zhou J."/>
            <person name="Mulhern D."/>
            <person name="Wang Y."/>
            <person name="Lee K.A."/>
            <person name="Yang V."/>
            <person name="Aguiar M."/>
            <person name="Kornhauser J."/>
            <person name="Jia X."/>
            <person name="Ren J."/>
            <person name="Beausoleil S.A."/>
            <person name="Silva J.C."/>
            <person name="Vemulapalli V."/>
            <person name="Bedford M.T."/>
            <person name="Comb M.J."/>
        </authorList>
    </citation>
    <scope>METHYLATION [LARGE SCALE ANALYSIS] AT ARG-145</scope>
    <scope>IDENTIFICATION BY MASS SPECTROMETRY [LARGE SCALE ANALYSIS]</scope>
    <source>
        <tissue>Embryo</tissue>
    </source>
</reference>
<keyword id="KW-0025">Alternative splicing</keyword>
<keyword id="KW-0488">Methylation</keyword>
<keyword id="KW-0539">Nucleus</keyword>
<keyword id="KW-0597">Phosphoprotein</keyword>
<keyword id="KW-1185">Reference proteome</keyword>
<evidence type="ECO:0000250" key="1">
    <source>
        <dbReference type="UniProtKB" id="Q5U2S0"/>
    </source>
</evidence>
<evidence type="ECO:0000250" key="2">
    <source>
        <dbReference type="UniProtKB" id="Q9BUV0"/>
    </source>
</evidence>
<evidence type="ECO:0000256" key="3">
    <source>
        <dbReference type="SAM" id="MobiDB-lite"/>
    </source>
</evidence>
<evidence type="ECO:0000303" key="4">
    <source>
    </source>
</evidence>
<evidence type="ECO:0000303" key="5">
    <source>
    </source>
</evidence>
<evidence type="ECO:0000303" key="6">
    <source ref="1"/>
</evidence>
<evidence type="ECO:0000305" key="7"/>
<evidence type="ECO:0007744" key="8">
    <source>
    </source>
</evidence>
<evidence type="ECO:0007744" key="9">
    <source>
    </source>
</evidence>
<gene>
    <name type="primary">Rsrp1</name>
    <name type="synonym">D4Wsu53e</name>
    <name type="ORF">MNCb-0169</name>
</gene>
<protein>
    <recommendedName>
        <fullName>Arginine/serine-rich protein 1</fullName>
    </recommendedName>
</protein>
<feature type="chain" id="PRO_0000297619" description="Arginine/serine-rich protein 1">
    <location>
        <begin position="1"/>
        <end position="298"/>
    </location>
</feature>
<feature type="region of interest" description="Disordered" evidence="3">
    <location>
        <begin position="1"/>
        <end position="135"/>
    </location>
</feature>
<feature type="region of interest" description="Disordered" evidence="3">
    <location>
        <begin position="161"/>
        <end position="181"/>
    </location>
</feature>
<feature type="region of interest" description="Disordered" evidence="3">
    <location>
        <begin position="218"/>
        <end position="298"/>
    </location>
</feature>
<feature type="compositionally biased region" description="Low complexity" evidence="3">
    <location>
        <begin position="23"/>
        <end position="36"/>
    </location>
</feature>
<feature type="compositionally biased region" description="Basic residues" evidence="3">
    <location>
        <begin position="60"/>
        <end position="105"/>
    </location>
</feature>
<feature type="compositionally biased region" description="Basic residues" evidence="3">
    <location>
        <begin position="124"/>
        <end position="135"/>
    </location>
</feature>
<feature type="compositionally biased region" description="Polar residues" evidence="3">
    <location>
        <begin position="219"/>
        <end position="228"/>
    </location>
</feature>
<feature type="compositionally biased region" description="Basic and acidic residues" evidence="3">
    <location>
        <begin position="230"/>
        <end position="246"/>
    </location>
</feature>
<feature type="compositionally biased region" description="Polar residues" evidence="3">
    <location>
        <begin position="247"/>
        <end position="271"/>
    </location>
</feature>
<feature type="compositionally biased region" description="Basic and acidic residues" evidence="3">
    <location>
        <begin position="274"/>
        <end position="289"/>
    </location>
</feature>
<feature type="modified residue" description="Phosphoserine" evidence="8">
    <location>
        <position position="17"/>
    </location>
</feature>
<feature type="modified residue" description="Phosphoserine" evidence="2">
    <location>
        <position position="118"/>
    </location>
</feature>
<feature type="modified residue" description="Phosphoserine" evidence="2">
    <location>
        <position position="120"/>
    </location>
</feature>
<feature type="modified residue" description="Omega-N-methylarginine" evidence="9">
    <location>
        <position position="145"/>
    </location>
</feature>
<feature type="modified residue" description="Phosphoserine" evidence="1">
    <location>
        <position position="282"/>
    </location>
</feature>
<feature type="splice variant" id="VSP_027308" description="In isoform 2." evidence="4 5">
    <original>HSEKQTEDATKNTSEKSSTQRNIAFSSNNSVAKPLQKTTKAAVEEKSSGSPKIDKKKSPYGLWIPV</original>
    <variation>VSAFRKLLPAFITLCQ</variation>
    <location>
        <begin position="233"/>
        <end position="298"/>
    </location>
</feature>
<feature type="splice variant" id="VSP_027309" description="In isoform 3." evidence="5 6">
    <original>HS</original>
    <variation>KS</variation>
    <location>
        <begin position="233"/>
        <end position="234"/>
    </location>
</feature>
<feature type="splice variant" id="VSP_027310" description="In isoform 3." evidence="5 6">
    <location>
        <begin position="235"/>
        <end position="298"/>
    </location>
</feature>
<feature type="sequence conflict" description="In Ref. 2; BAB28190." evidence="7" ref="2">
    <original>P</original>
    <variation>T</variation>
    <location>
        <position position="158"/>
    </location>
</feature>
<sequence length="298" mass="34539">MSSAAMSKYVNDMWPGSPQEKASPSTSGSGRSSRLSSRSRSRSSSRSSRRDSRSSSRSSSRSHSRPRRSRRSRSRSRRRHQRKYRRYSRSYSRSRSRSRSHRYHRDSRYERPRRYYKSPSPYRSRSRSRSRGRSQHRWSYYAITRGRRYYGFGRTVYPEDRPRWRERSRTRSRSRSRTPFRLSEKDRMELLEIAKANAAKALGTANFDLPASLRAKEASQGTAVSSSGPKVEHSEKQTEDATKNTSEKSSTQRNIAFSSNNSVAKPLQKTTKAAVEEKSSGSPKIDKKKSPYGLWIPV</sequence>
<dbReference type="EMBL" id="AB041555">
    <property type="protein sequence ID" value="BAA95040.1"/>
    <property type="molecule type" value="mRNA"/>
</dbReference>
<dbReference type="EMBL" id="AK003799">
    <property type="protein sequence ID" value="BAB23002.1"/>
    <property type="molecule type" value="mRNA"/>
</dbReference>
<dbReference type="EMBL" id="AK012363">
    <property type="protein sequence ID" value="BAB28190.3"/>
    <property type="molecule type" value="mRNA"/>
</dbReference>
<dbReference type="EMBL" id="AK028145">
    <property type="protein sequence ID" value="BAC25773.1"/>
    <property type="molecule type" value="mRNA"/>
</dbReference>
<dbReference type="EMBL" id="AK029529">
    <property type="protein sequence ID" value="BAC26498.1"/>
    <property type="molecule type" value="mRNA"/>
</dbReference>
<dbReference type="EMBL" id="AK150024">
    <property type="protein sequence ID" value="BAE29249.1"/>
    <property type="molecule type" value="mRNA"/>
</dbReference>
<dbReference type="EMBL" id="AK150665">
    <property type="protein sequence ID" value="BAE29749.1"/>
    <property type="molecule type" value="mRNA"/>
</dbReference>
<dbReference type="EMBL" id="AK152736">
    <property type="protein sequence ID" value="BAE31456.1"/>
    <property type="molecule type" value="mRNA"/>
</dbReference>
<dbReference type="EMBL" id="AK160993">
    <property type="protein sequence ID" value="BAE36138.1"/>
    <property type="molecule type" value="mRNA"/>
</dbReference>
<dbReference type="EMBL" id="AK169598">
    <property type="protein sequence ID" value="BAE41249.1"/>
    <property type="molecule type" value="mRNA"/>
</dbReference>
<dbReference type="EMBL" id="AK169760">
    <property type="protein sequence ID" value="BAE41350.1"/>
    <property type="molecule type" value="mRNA"/>
</dbReference>
<dbReference type="EMBL" id="AL611963">
    <property type="status" value="NOT_ANNOTATED_CDS"/>
    <property type="molecule type" value="Genomic_DNA"/>
</dbReference>
<dbReference type="EMBL" id="BC043057">
    <property type="protein sequence ID" value="AAH43057.1"/>
    <property type="molecule type" value="mRNA"/>
</dbReference>
<dbReference type="EMBL" id="BC046231">
    <property type="protein sequence ID" value="AAH46231.2"/>
    <property type="molecule type" value="mRNA"/>
</dbReference>
<dbReference type="EMBL" id="BC054728">
    <property type="protein sequence ID" value="AAH54728.1"/>
    <property type="molecule type" value="mRNA"/>
</dbReference>
<dbReference type="EMBL" id="BC056986">
    <property type="protein sequence ID" value="AAH56986.1"/>
    <property type="molecule type" value="mRNA"/>
</dbReference>
<dbReference type="CCDS" id="CCDS51328.1">
    <molecule id="Q3UC65-1"/>
</dbReference>
<dbReference type="RefSeq" id="NP_076154.3">
    <molecule id="Q3UC65-1"/>
    <property type="nucleotide sequence ID" value="NM_023665.3"/>
</dbReference>
<dbReference type="SMR" id="Q3UC65"/>
<dbReference type="FunCoup" id="Q3UC65">
    <property type="interactions" value="215"/>
</dbReference>
<dbReference type="IntAct" id="Q3UC65">
    <property type="interactions" value="1"/>
</dbReference>
<dbReference type="MINT" id="Q3UC65"/>
<dbReference type="STRING" id="10090.ENSMUSP00000077226"/>
<dbReference type="GlyGen" id="Q3UC65">
    <property type="glycosylation" value="1 site"/>
</dbReference>
<dbReference type="iPTMnet" id="Q3UC65"/>
<dbReference type="PhosphoSitePlus" id="Q3UC65"/>
<dbReference type="jPOST" id="Q3UC65"/>
<dbReference type="PaxDb" id="10090-ENSMUSP00000077226"/>
<dbReference type="PeptideAtlas" id="Q3UC65"/>
<dbReference type="ProteomicsDB" id="256792">
    <molecule id="Q3UC65-1"/>
</dbReference>
<dbReference type="ProteomicsDB" id="256793">
    <molecule id="Q3UC65-2"/>
</dbReference>
<dbReference type="ProteomicsDB" id="256794">
    <molecule id="Q3UC65-3"/>
</dbReference>
<dbReference type="Pumba" id="Q3UC65"/>
<dbReference type="Antibodypedia" id="30373">
    <property type="antibodies" value="65 antibodies from 14 providers"/>
</dbReference>
<dbReference type="DNASU" id="27981"/>
<dbReference type="Ensembl" id="ENSMUST00000078084.7">
    <molecule id="Q3UC65-1"/>
    <property type="protein sequence ID" value="ENSMUSP00000077226.7"/>
    <property type="gene ID" value="ENSMUSG00000037266.19"/>
</dbReference>
<dbReference type="GeneID" id="27981"/>
<dbReference type="KEGG" id="mmu:27981"/>
<dbReference type="UCSC" id="uc008vfx.1">
    <molecule id="Q3UC65-1"/>
    <property type="organism name" value="mouse"/>
</dbReference>
<dbReference type="UCSC" id="uc008vfz.1">
    <molecule id="Q3UC65-3"/>
    <property type="organism name" value="mouse"/>
</dbReference>
<dbReference type="AGR" id="MGI:106498"/>
<dbReference type="CTD" id="57035"/>
<dbReference type="MGI" id="MGI:106498">
    <property type="gene designation" value="Rsrp1"/>
</dbReference>
<dbReference type="VEuPathDB" id="HostDB:ENSMUSG00000037266"/>
<dbReference type="eggNOG" id="ENOG502S6J6">
    <property type="taxonomic scope" value="Eukaryota"/>
</dbReference>
<dbReference type="GeneTree" id="ENSGT00730000111390"/>
<dbReference type="HOGENOM" id="CLU_058639_0_0_1"/>
<dbReference type="InParanoid" id="Q3UC65"/>
<dbReference type="OMA" id="YGQWIPV"/>
<dbReference type="OrthoDB" id="9950396at2759"/>
<dbReference type="TreeFam" id="TF338669"/>
<dbReference type="BioGRID-ORCS" id="27981">
    <property type="hits" value="3 hits in 78 CRISPR screens"/>
</dbReference>
<dbReference type="ChiTaRS" id="Rsrp1">
    <property type="organism name" value="mouse"/>
</dbReference>
<dbReference type="PRO" id="PR:Q3UC65"/>
<dbReference type="Proteomes" id="UP000000589">
    <property type="component" value="Chromosome 4"/>
</dbReference>
<dbReference type="RNAct" id="Q3UC65">
    <property type="molecule type" value="protein"/>
</dbReference>
<dbReference type="Bgee" id="ENSMUSG00000037266">
    <property type="expression patterns" value="Expressed in lymph node and 262 other cell types or tissues"/>
</dbReference>
<dbReference type="GO" id="GO:0005634">
    <property type="term" value="C:nucleus"/>
    <property type="evidence" value="ECO:0000250"/>
    <property type="project" value="UniProtKB"/>
</dbReference>
<dbReference type="GO" id="GO:0000245">
    <property type="term" value="P:spliceosomal complex assembly"/>
    <property type="evidence" value="ECO:0000250"/>
    <property type="project" value="UniProtKB"/>
</dbReference>
<dbReference type="InterPro" id="IPR029656">
    <property type="entry name" value="RSRP1"/>
</dbReference>
<dbReference type="PANTHER" id="PTHR47622">
    <property type="entry name" value="ARGININE/SERINE-RICH PROTEIN 1"/>
    <property type="match status" value="1"/>
</dbReference>
<dbReference type="PANTHER" id="PTHR47622:SF1">
    <property type="entry name" value="ARGININE_SERINE-RICH PROTEIN 1"/>
    <property type="match status" value="1"/>
</dbReference>
<dbReference type="Pfam" id="PF17069">
    <property type="entry name" value="RSRP"/>
    <property type="match status" value="1"/>
</dbReference>
<comment type="function">
    <text evidence="2">Probably acts as a spliceosomal factor that contributes to spliceosome assembly and regulates the isoform switching of proteins such as PARP6.</text>
</comment>
<comment type="subcellular location">
    <subcellularLocation>
        <location evidence="2">Nucleus</location>
    </subcellularLocation>
</comment>
<comment type="alternative products">
    <event type="alternative splicing"/>
    <isoform>
        <id>Q3UC65-1</id>
        <name>1</name>
        <sequence type="displayed"/>
    </isoform>
    <isoform>
        <id>Q3UC65-2</id>
        <name>2</name>
        <sequence type="described" ref="VSP_027308"/>
    </isoform>
    <isoform>
        <id>Q3UC65-3</id>
        <name>3</name>
        <sequence type="described" ref="VSP_027309 VSP_027310"/>
    </isoform>
</comment>
<comment type="PTM">
    <text evidence="2">Phosphorylated. Phosphorylation at Ser-118 and Ser-120 mediates the interaction with spliceosome proteins.</text>
</comment>
<comment type="miscellaneous">
    <molecule>Isoform 2</molecule>
    <text evidence="7">May be due to intron retention.</text>
</comment>
<comment type="similarity">
    <text evidence="7">Belongs to the RSRP family.</text>
</comment>
<comment type="caution">
    <text evidence="7">It is uncertain whether Met-1 or Met-6 is the initiator.</text>
</comment>
<accession>Q3UC65</accession>
<accession>Q80Y97</accession>
<accession>Q9CSN6</accession>
<accession>Q9D194</accession>
<accession>Q9JJF1</accession>
<proteinExistence type="evidence at protein level"/>
<organism>
    <name type="scientific">Mus musculus</name>
    <name type="common">Mouse</name>
    <dbReference type="NCBI Taxonomy" id="10090"/>
    <lineage>
        <taxon>Eukaryota</taxon>
        <taxon>Metazoa</taxon>
        <taxon>Chordata</taxon>
        <taxon>Craniata</taxon>
        <taxon>Vertebrata</taxon>
        <taxon>Euteleostomi</taxon>
        <taxon>Mammalia</taxon>
        <taxon>Eutheria</taxon>
        <taxon>Euarchontoglires</taxon>
        <taxon>Glires</taxon>
        <taxon>Rodentia</taxon>
        <taxon>Myomorpha</taxon>
        <taxon>Muroidea</taxon>
        <taxon>Muridae</taxon>
        <taxon>Murinae</taxon>
        <taxon>Mus</taxon>
        <taxon>Mus</taxon>
    </lineage>
</organism>
<name>RSRP1_MOUSE</name>